<organism>
    <name type="scientific">Yersinia pseudotuberculosis serotype I (strain IP32953)</name>
    <dbReference type="NCBI Taxonomy" id="273123"/>
    <lineage>
        <taxon>Bacteria</taxon>
        <taxon>Pseudomonadati</taxon>
        <taxon>Pseudomonadota</taxon>
        <taxon>Gammaproteobacteria</taxon>
        <taxon>Enterobacterales</taxon>
        <taxon>Yersiniaceae</taxon>
        <taxon>Yersinia</taxon>
    </lineage>
</organism>
<comment type="function">
    <text evidence="1">Multidrug efflux pump that functions probably as a Na(+)/drug antiporter.</text>
</comment>
<comment type="subcellular location">
    <subcellularLocation>
        <location evidence="1">Cell inner membrane</location>
        <topology evidence="1">Multi-pass membrane protein</topology>
    </subcellularLocation>
</comment>
<comment type="similarity">
    <text evidence="1">Belongs to the multi antimicrobial extrusion (MATE) (TC 2.A.66.1) family. MdtK subfamily.</text>
</comment>
<evidence type="ECO:0000255" key="1">
    <source>
        <dbReference type="HAMAP-Rule" id="MF_00400"/>
    </source>
</evidence>
<keyword id="KW-0050">Antiport</keyword>
<keyword id="KW-0997">Cell inner membrane</keyword>
<keyword id="KW-1003">Cell membrane</keyword>
<keyword id="KW-0406">Ion transport</keyword>
<keyword id="KW-0472">Membrane</keyword>
<keyword id="KW-0915">Sodium</keyword>
<keyword id="KW-0739">Sodium transport</keyword>
<keyword id="KW-0812">Transmembrane</keyword>
<keyword id="KW-1133">Transmembrane helix</keyword>
<keyword id="KW-0813">Transport</keyword>
<name>MDTK_YERPS</name>
<protein>
    <recommendedName>
        <fullName evidence="1">Multidrug resistance protein MdtK</fullName>
    </recommendedName>
    <alternativeName>
        <fullName evidence="1">Multidrug-efflux transporter</fullName>
    </alternativeName>
</protein>
<reference key="1">
    <citation type="journal article" date="2004" name="Proc. Natl. Acad. Sci. U.S.A.">
        <title>Insights into the evolution of Yersinia pestis through whole-genome comparison with Yersinia pseudotuberculosis.</title>
        <authorList>
            <person name="Chain P.S.G."/>
            <person name="Carniel E."/>
            <person name="Larimer F.W."/>
            <person name="Lamerdin J."/>
            <person name="Stoutland P.O."/>
            <person name="Regala W.M."/>
            <person name="Georgescu A.M."/>
            <person name="Vergez L.M."/>
            <person name="Land M.L."/>
            <person name="Motin V.L."/>
            <person name="Brubaker R.R."/>
            <person name="Fowler J."/>
            <person name="Hinnebusch J."/>
            <person name="Marceau M."/>
            <person name="Medigue C."/>
            <person name="Simonet M."/>
            <person name="Chenal-Francisque V."/>
            <person name="Souza B."/>
            <person name="Dacheux D."/>
            <person name="Elliott J.M."/>
            <person name="Derbise A."/>
            <person name="Hauser L.J."/>
            <person name="Garcia E."/>
        </authorList>
    </citation>
    <scope>NUCLEOTIDE SEQUENCE [LARGE SCALE GENOMIC DNA]</scope>
    <source>
        <strain>IP32953</strain>
    </source>
</reference>
<proteinExistence type="inferred from homology"/>
<sequence length="457" mass="49401">MQKYIVEARSLLALAIPVVIAQLSQTAMGVVDTIMAGSVSATDMAAVAVGTSIWLPAILFGHGLLLALTPTVAQLNGSGRRSQIAHQVRQGFWLALCVSVLIMLVLYNSDHVIKQMDNIDPVLAQKAVGFLHAIMWGVPGYLFFQVLRNQCEGLSKTKPGMVIGFVGLLVNIPINYIFIYGKFGAPALGGVGCGVATASVYWVMFLMMRWYVTRARSQQDIKLEKGFAAPDWQVMKRLSGLGLPVALALFFEVTLFAVVALLVSPLGIVAVAGHQIALNFSSLMFMLPMSLSVAATIRVGFRLGQGAVEQAQVAAYTSMAVGLLLASVTAVFTIVFREHIALLYNKTPEVVTMASHLMLLAALYQLSDAVQVIGSGVLRGYKDTRSIFFITFTAYWLLGLPSGYLLGLTDYILPAMGPAGFWIGFIIGLTAAAILMVLRIRWLQKQPTAFILQRAAH</sequence>
<gene>
    <name evidence="1" type="primary">mdtK</name>
    <name type="synonym">norM</name>
    <name type="ordered locus">YPTB2305</name>
</gene>
<feature type="chain" id="PRO_0000164193" description="Multidrug resistance protein MdtK">
    <location>
        <begin position="1"/>
        <end position="457"/>
    </location>
</feature>
<feature type="transmembrane region" description="Helical" evidence="1">
    <location>
        <begin position="11"/>
        <end position="31"/>
    </location>
</feature>
<feature type="transmembrane region" description="Helical" evidence="1">
    <location>
        <begin position="46"/>
        <end position="66"/>
    </location>
</feature>
<feature type="transmembrane region" description="Helical" evidence="1">
    <location>
        <begin position="93"/>
        <end position="113"/>
    </location>
</feature>
<feature type="transmembrane region" description="Helical" evidence="1">
    <location>
        <begin position="127"/>
        <end position="147"/>
    </location>
</feature>
<feature type="transmembrane region" description="Helical" evidence="1">
    <location>
        <begin position="160"/>
        <end position="180"/>
    </location>
</feature>
<feature type="transmembrane region" description="Helical" evidence="1">
    <location>
        <begin position="188"/>
        <end position="208"/>
    </location>
</feature>
<feature type="transmembrane region" description="Helical" evidence="1">
    <location>
        <begin position="243"/>
        <end position="263"/>
    </location>
</feature>
<feature type="transmembrane region" description="Helical" evidence="1">
    <location>
        <begin position="283"/>
        <end position="301"/>
    </location>
</feature>
<feature type="transmembrane region" description="Helical" evidence="1">
    <location>
        <begin position="316"/>
        <end position="336"/>
    </location>
</feature>
<feature type="transmembrane region" description="Helical" evidence="1">
    <location>
        <begin position="357"/>
        <end position="377"/>
    </location>
</feature>
<feature type="transmembrane region" description="Helical" evidence="1">
    <location>
        <begin position="387"/>
        <end position="407"/>
    </location>
</feature>
<feature type="transmembrane region" description="Helical" evidence="1">
    <location>
        <begin position="418"/>
        <end position="438"/>
    </location>
</feature>
<dbReference type="EMBL" id="BX936398">
    <property type="protein sequence ID" value="CAH21543.1"/>
    <property type="molecule type" value="Genomic_DNA"/>
</dbReference>
<dbReference type="RefSeq" id="WP_002210937.1">
    <property type="nucleotide sequence ID" value="NZ_CP009712.1"/>
</dbReference>
<dbReference type="SMR" id="Q66A27"/>
<dbReference type="KEGG" id="ypo:BZ17_153"/>
<dbReference type="KEGG" id="yps:YPTB2305"/>
<dbReference type="PATRIC" id="fig|273123.14.peg.159"/>
<dbReference type="Proteomes" id="UP000001011">
    <property type="component" value="Chromosome"/>
</dbReference>
<dbReference type="GO" id="GO:0005886">
    <property type="term" value="C:plasma membrane"/>
    <property type="evidence" value="ECO:0007669"/>
    <property type="project" value="UniProtKB-SubCell"/>
</dbReference>
<dbReference type="GO" id="GO:0015297">
    <property type="term" value="F:antiporter activity"/>
    <property type="evidence" value="ECO:0007669"/>
    <property type="project" value="UniProtKB-UniRule"/>
</dbReference>
<dbReference type="GO" id="GO:0042910">
    <property type="term" value="F:xenobiotic transmembrane transporter activity"/>
    <property type="evidence" value="ECO:0007669"/>
    <property type="project" value="UniProtKB-UniRule"/>
</dbReference>
<dbReference type="GO" id="GO:0006814">
    <property type="term" value="P:sodium ion transport"/>
    <property type="evidence" value="ECO:0007669"/>
    <property type="project" value="UniProtKB-UniRule"/>
</dbReference>
<dbReference type="GO" id="GO:0006855">
    <property type="term" value="P:xenobiotic transmembrane transport"/>
    <property type="evidence" value="ECO:0007669"/>
    <property type="project" value="UniProtKB-UniRule"/>
</dbReference>
<dbReference type="CDD" id="cd13131">
    <property type="entry name" value="MATE_NorM_like"/>
    <property type="match status" value="1"/>
</dbReference>
<dbReference type="HAMAP" id="MF_00400">
    <property type="entry name" value="MdtK"/>
    <property type="match status" value="1"/>
</dbReference>
<dbReference type="InterPro" id="IPR002528">
    <property type="entry name" value="MATE_fam"/>
</dbReference>
<dbReference type="InterPro" id="IPR050222">
    <property type="entry name" value="MATE_MdtK"/>
</dbReference>
<dbReference type="InterPro" id="IPR048279">
    <property type="entry name" value="MdtK-like"/>
</dbReference>
<dbReference type="InterPro" id="IPR022913">
    <property type="entry name" value="Multidrug-R_MdtK"/>
</dbReference>
<dbReference type="NCBIfam" id="TIGR00797">
    <property type="entry name" value="matE"/>
    <property type="match status" value="1"/>
</dbReference>
<dbReference type="PANTHER" id="PTHR43298:SF2">
    <property type="entry name" value="FMN_FAD EXPORTER YEEO-RELATED"/>
    <property type="match status" value="1"/>
</dbReference>
<dbReference type="PANTHER" id="PTHR43298">
    <property type="entry name" value="MULTIDRUG RESISTANCE PROTEIN NORM-RELATED"/>
    <property type="match status" value="1"/>
</dbReference>
<dbReference type="Pfam" id="PF01554">
    <property type="entry name" value="MatE"/>
    <property type="match status" value="2"/>
</dbReference>
<dbReference type="PIRSF" id="PIRSF006603">
    <property type="entry name" value="DinF"/>
    <property type="match status" value="1"/>
</dbReference>
<accession>Q66A27</accession>